<dbReference type="EMBL" id="X53421">
    <property type="protein sequence ID" value="CAA37503.1"/>
    <property type="molecule type" value="Genomic_DNA"/>
</dbReference>
<dbReference type="EMBL" id="CH940647">
    <property type="protein sequence ID" value="EDW69115.1"/>
    <property type="molecule type" value="Genomic_DNA"/>
</dbReference>
<dbReference type="PIR" id="D32998">
    <property type="entry name" value="D32998"/>
</dbReference>
<dbReference type="RefSeq" id="XP_002046773.1">
    <property type="nucleotide sequence ID" value="XM_002046737.3"/>
</dbReference>
<dbReference type="FunCoup" id="P24512">
    <property type="interactions" value="4"/>
</dbReference>
<dbReference type="STRING" id="7244.P24512"/>
<dbReference type="EnsemblMetazoa" id="FBtr0228995">
    <property type="protein sequence ID" value="FBpp0227487"/>
    <property type="gene ID" value="FBgn0013069"/>
</dbReference>
<dbReference type="EnsemblMetazoa" id="XM_002046737.3">
    <property type="protein sequence ID" value="XP_002046773.1"/>
    <property type="gene ID" value="LOC6623266"/>
</dbReference>
<dbReference type="GeneID" id="6623266"/>
<dbReference type="KEGG" id="dvi:6623266"/>
<dbReference type="CTD" id="39001"/>
<dbReference type="eggNOG" id="ENOG502T818">
    <property type="taxonomic scope" value="Eukaryota"/>
</dbReference>
<dbReference type="HOGENOM" id="CLU_153425_0_0_1"/>
<dbReference type="InParanoid" id="P24512"/>
<dbReference type="OMA" id="NRYGWEQ"/>
<dbReference type="OrthoDB" id="8027300at2759"/>
<dbReference type="PhylomeDB" id="P24512"/>
<dbReference type="ChiTaRS" id="Cp16">
    <property type="organism name" value="fly"/>
</dbReference>
<dbReference type="Proteomes" id="UP000008792">
    <property type="component" value="Unassembled WGS sequence"/>
</dbReference>
<dbReference type="GO" id="GO:0042600">
    <property type="term" value="C:egg chorion"/>
    <property type="evidence" value="ECO:0007669"/>
    <property type="project" value="InterPro"/>
</dbReference>
<dbReference type="GO" id="GO:0005576">
    <property type="term" value="C:extracellular region"/>
    <property type="evidence" value="ECO:0007669"/>
    <property type="project" value="UniProtKB-SubCell"/>
</dbReference>
<dbReference type="GO" id="GO:0007304">
    <property type="term" value="P:chorion-containing eggshell formation"/>
    <property type="evidence" value="ECO:0007669"/>
    <property type="project" value="EnsemblMetazoa"/>
</dbReference>
<dbReference type="GO" id="GO:0046843">
    <property type="term" value="P:dorsal appendage formation"/>
    <property type="evidence" value="ECO:0007669"/>
    <property type="project" value="EnsemblMetazoa"/>
</dbReference>
<dbReference type="InterPro" id="IPR008450">
    <property type="entry name" value="Chorion_S16"/>
</dbReference>
<dbReference type="Pfam" id="PF05836">
    <property type="entry name" value="Chorion_S16"/>
    <property type="match status" value="1"/>
</dbReference>
<reference key="1">
    <citation type="journal article" date="1989" name="J. Mol. Evol.">
        <title>Evolution of the autosomal chorion cluster in Drosophila. II. Chorion gene expression and sequence comparisons of the s16 and s19 genes in evolutionarily distant species.</title>
        <authorList>
            <person name="Fenerjian M.G."/>
            <person name="Martinez-Cruzado J.C."/>
            <person name="Swimmer C."/>
            <person name="King D."/>
            <person name="Kafatos F.C."/>
        </authorList>
    </citation>
    <scope>NUCLEOTIDE SEQUENCE [GENOMIC DNA]</scope>
</reference>
<reference key="2">
    <citation type="journal article" date="2007" name="Nature">
        <title>Evolution of genes and genomes on the Drosophila phylogeny.</title>
        <authorList>
            <consortium name="Drosophila 12 genomes consortium"/>
        </authorList>
    </citation>
    <scope>NUCLEOTIDE SEQUENCE [LARGE SCALE GENOMIC DNA]</scope>
    <source>
        <strain>Tucson 15010-1051.87</strain>
    </source>
</reference>
<feature type="signal peptide" evidence="2">
    <location>
        <begin position="1"/>
        <end position="21"/>
    </location>
</feature>
<feature type="chain" id="PRO_0000089619" description="Chorion protein S16">
    <location>
        <begin position="22"/>
        <end position="139"/>
    </location>
</feature>
<sequence>MSVNYMRLLCLMACCFSVCLAYRPSGNSYRSGGYGEYIKPVETAEAQAAALTNAAGAAASSAKLDGADWYALNRYGWEQGKPLLVKPYGPLDNLYAAALPPRAFVAEIDPVFKRNSYGGAYGERTVTLNTGSKLAVSAA</sequence>
<protein>
    <recommendedName>
        <fullName>Chorion protein S16</fullName>
    </recommendedName>
</protein>
<accession>P24512</accession>
<accession>B4LEN0</accession>
<name>CH16_DROVI</name>
<comment type="function">
    <text evidence="1">Chorion membrane (egg shell) protein; plays a role in protecting the egg from the environment.</text>
</comment>
<comment type="subcellular location">
    <subcellularLocation>
        <location evidence="1">Secreted</location>
    </subcellularLocation>
</comment>
<comment type="similarity">
    <text evidence="3">Belongs to the chorion protein S16 family.</text>
</comment>
<proteinExistence type="inferred from homology"/>
<evidence type="ECO:0000250" key="1"/>
<evidence type="ECO:0000255" key="2"/>
<evidence type="ECO:0000305" key="3"/>
<keyword id="KW-1185">Reference proteome</keyword>
<keyword id="KW-0964">Secreted</keyword>
<keyword id="KW-0732">Signal</keyword>
<gene>
    <name type="primary">Cp16</name>
    <name type="synonym">S16</name>
    <name type="ORF">GJ13070</name>
</gene>
<organism>
    <name type="scientific">Drosophila virilis</name>
    <name type="common">Fruit fly</name>
    <dbReference type="NCBI Taxonomy" id="7244"/>
    <lineage>
        <taxon>Eukaryota</taxon>
        <taxon>Metazoa</taxon>
        <taxon>Ecdysozoa</taxon>
        <taxon>Arthropoda</taxon>
        <taxon>Hexapoda</taxon>
        <taxon>Insecta</taxon>
        <taxon>Pterygota</taxon>
        <taxon>Neoptera</taxon>
        <taxon>Endopterygota</taxon>
        <taxon>Diptera</taxon>
        <taxon>Brachycera</taxon>
        <taxon>Muscomorpha</taxon>
        <taxon>Ephydroidea</taxon>
        <taxon>Drosophilidae</taxon>
        <taxon>Drosophila</taxon>
    </lineage>
</organism>